<accession>A5D114</accession>
<organism>
    <name type="scientific">Pelotomaculum thermopropionicum (strain DSM 13744 / JCM 10971 / SI)</name>
    <dbReference type="NCBI Taxonomy" id="370438"/>
    <lineage>
        <taxon>Bacteria</taxon>
        <taxon>Bacillati</taxon>
        <taxon>Bacillota</taxon>
        <taxon>Clostridia</taxon>
        <taxon>Eubacteriales</taxon>
        <taxon>Desulfotomaculaceae</taxon>
        <taxon>Pelotomaculum</taxon>
    </lineage>
</organism>
<name>MRAZ_PELTS</name>
<feature type="chain" id="PRO_1000084011" description="Transcriptional regulator MraZ">
    <location>
        <begin position="1"/>
        <end position="145"/>
    </location>
</feature>
<feature type="domain" description="SpoVT-AbrB 1" evidence="2">
    <location>
        <begin position="5"/>
        <end position="47"/>
    </location>
</feature>
<feature type="domain" description="SpoVT-AbrB 2" evidence="2">
    <location>
        <begin position="76"/>
        <end position="119"/>
    </location>
</feature>
<dbReference type="EMBL" id="AP009389">
    <property type="protein sequence ID" value="BAF60051.1"/>
    <property type="molecule type" value="Genomic_DNA"/>
</dbReference>
<dbReference type="SMR" id="A5D114"/>
<dbReference type="STRING" id="370438.PTH_1870"/>
<dbReference type="KEGG" id="pth:PTH_1870"/>
<dbReference type="eggNOG" id="COG2001">
    <property type="taxonomic scope" value="Bacteria"/>
</dbReference>
<dbReference type="HOGENOM" id="CLU_107907_0_5_9"/>
<dbReference type="Proteomes" id="UP000006556">
    <property type="component" value="Chromosome"/>
</dbReference>
<dbReference type="GO" id="GO:0005737">
    <property type="term" value="C:cytoplasm"/>
    <property type="evidence" value="ECO:0007669"/>
    <property type="project" value="UniProtKB-UniRule"/>
</dbReference>
<dbReference type="GO" id="GO:0009295">
    <property type="term" value="C:nucleoid"/>
    <property type="evidence" value="ECO:0007669"/>
    <property type="project" value="UniProtKB-SubCell"/>
</dbReference>
<dbReference type="GO" id="GO:0003700">
    <property type="term" value="F:DNA-binding transcription factor activity"/>
    <property type="evidence" value="ECO:0007669"/>
    <property type="project" value="UniProtKB-UniRule"/>
</dbReference>
<dbReference type="GO" id="GO:0000976">
    <property type="term" value="F:transcription cis-regulatory region binding"/>
    <property type="evidence" value="ECO:0007669"/>
    <property type="project" value="TreeGrafter"/>
</dbReference>
<dbReference type="GO" id="GO:2000143">
    <property type="term" value="P:negative regulation of DNA-templated transcription initiation"/>
    <property type="evidence" value="ECO:0007669"/>
    <property type="project" value="TreeGrafter"/>
</dbReference>
<dbReference type="CDD" id="cd16321">
    <property type="entry name" value="MraZ_C"/>
    <property type="match status" value="1"/>
</dbReference>
<dbReference type="CDD" id="cd16320">
    <property type="entry name" value="MraZ_N"/>
    <property type="match status" value="1"/>
</dbReference>
<dbReference type="FunFam" id="3.40.1550.20:FF:000002">
    <property type="entry name" value="Transcriptional regulator MraZ"/>
    <property type="match status" value="1"/>
</dbReference>
<dbReference type="Gene3D" id="3.40.1550.20">
    <property type="entry name" value="Transcriptional regulator MraZ domain"/>
    <property type="match status" value="1"/>
</dbReference>
<dbReference type="HAMAP" id="MF_01008">
    <property type="entry name" value="MraZ"/>
    <property type="match status" value="1"/>
</dbReference>
<dbReference type="InterPro" id="IPR003444">
    <property type="entry name" value="MraZ"/>
</dbReference>
<dbReference type="InterPro" id="IPR035644">
    <property type="entry name" value="MraZ_C"/>
</dbReference>
<dbReference type="InterPro" id="IPR020603">
    <property type="entry name" value="MraZ_dom"/>
</dbReference>
<dbReference type="InterPro" id="IPR035642">
    <property type="entry name" value="MraZ_N"/>
</dbReference>
<dbReference type="InterPro" id="IPR038619">
    <property type="entry name" value="MraZ_sf"/>
</dbReference>
<dbReference type="InterPro" id="IPR007159">
    <property type="entry name" value="SpoVT-AbrB_dom"/>
</dbReference>
<dbReference type="InterPro" id="IPR037914">
    <property type="entry name" value="SpoVT-AbrB_sf"/>
</dbReference>
<dbReference type="NCBIfam" id="TIGR00242">
    <property type="entry name" value="division/cell wall cluster transcriptional repressor MraZ"/>
    <property type="match status" value="1"/>
</dbReference>
<dbReference type="PANTHER" id="PTHR34701">
    <property type="entry name" value="TRANSCRIPTIONAL REGULATOR MRAZ"/>
    <property type="match status" value="1"/>
</dbReference>
<dbReference type="PANTHER" id="PTHR34701:SF1">
    <property type="entry name" value="TRANSCRIPTIONAL REGULATOR MRAZ"/>
    <property type="match status" value="1"/>
</dbReference>
<dbReference type="Pfam" id="PF02381">
    <property type="entry name" value="MraZ"/>
    <property type="match status" value="2"/>
</dbReference>
<dbReference type="SUPFAM" id="SSF89447">
    <property type="entry name" value="AbrB/MazE/MraZ-like"/>
    <property type="match status" value="1"/>
</dbReference>
<dbReference type="PROSITE" id="PS51740">
    <property type="entry name" value="SPOVT_ABRB"/>
    <property type="match status" value="2"/>
</dbReference>
<keyword id="KW-0963">Cytoplasm</keyword>
<keyword id="KW-0238">DNA-binding</keyword>
<keyword id="KW-1185">Reference proteome</keyword>
<keyword id="KW-0677">Repeat</keyword>
<keyword id="KW-0804">Transcription</keyword>
<keyword id="KW-0805">Transcription regulation</keyword>
<reference key="1">
    <citation type="journal article" date="2008" name="Genome Res.">
        <title>The genome of Pelotomaculum thermopropionicum reveals niche-associated evolution in anaerobic microbiota.</title>
        <authorList>
            <person name="Kosaka T."/>
            <person name="Kato S."/>
            <person name="Shimoyama T."/>
            <person name="Ishii S."/>
            <person name="Abe T."/>
            <person name="Watanabe K."/>
        </authorList>
    </citation>
    <scope>NUCLEOTIDE SEQUENCE [LARGE SCALE GENOMIC DNA]</scope>
    <source>
        <strain>DSM 13744 / JCM 10971 / SI</strain>
    </source>
</reference>
<comment type="subunit">
    <text evidence="1">Forms oligomers.</text>
</comment>
<comment type="subcellular location">
    <subcellularLocation>
        <location evidence="1">Cytoplasm</location>
        <location evidence="1">Nucleoid</location>
    </subcellularLocation>
</comment>
<comment type="similarity">
    <text evidence="1">Belongs to the MraZ family.</text>
</comment>
<sequence>MFMGEHQHSIDPKGRLFIPARFREGLGNRFVLTKGLDGCLFAYPLPEWEALEQKLKSLPFTRGDARAFVRFFFSGAVECEADKQGRILIPLNLREYARLEKEAVIIGVSSRVEIWAKDQWEHYKGQAASSYEEIAEKIVDLNLGI</sequence>
<proteinExistence type="inferred from homology"/>
<gene>
    <name evidence="1" type="primary">mraZ</name>
    <name type="ordered locus">PTH_1870</name>
</gene>
<protein>
    <recommendedName>
        <fullName>Transcriptional regulator MraZ</fullName>
    </recommendedName>
</protein>
<evidence type="ECO:0000255" key="1">
    <source>
        <dbReference type="HAMAP-Rule" id="MF_01008"/>
    </source>
</evidence>
<evidence type="ECO:0000255" key="2">
    <source>
        <dbReference type="PROSITE-ProRule" id="PRU01076"/>
    </source>
</evidence>